<proteinExistence type="inferred from homology"/>
<feature type="chain" id="PRO_0000210886" description="Acyl-homoserine-lactone synthase">
    <location>
        <begin position="1"/>
        <end position="212"/>
    </location>
</feature>
<reference key="1">
    <citation type="journal article" date="1998" name="Mol. Microbiol.">
        <title>Characterization of the Erwinia chrysanthemi expI-expR locus directing the synthesis of two N-acyl-homoserine lactone signal molecules.</title>
        <authorList>
            <person name="Nasser W."/>
            <person name="Bouillant M.L."/>
            <person name="Salmond G."/>
            <person name="Reverchon S."/>
        </authorList>
    </citation>
    <scope>NUCLEOTIDE SEQUENCE [GENOMIC DNA]</scope>
    <source>
        <strain>3937</strain>
    </source>
</reference>
<reference key="2">
    <citation type="journal article" date="2011" name="J. Bacteriol.">
        <title>Genome sequence of the plant-pathogenic bacterium Dickeya dadantii 3937.</title>
        <authorList>
            <person name="Glasner J.D."/>
            <person name="Yang C.H."/>
            <person name="Reverchon S."/>
            <person name="Hugouvieux-Cotte-Pattat N."/>
            <person name="Condemine G."/>
            <person name="Bohin J.P."/>
            <person name="Van Gijsegem F."/>
            <person name="Yang S."/>
            <person name="Franza T."/>
            <person name="Expert D."/>
            <person name="Plunkett G. III"/>
            <person name="San Francisco M.J."/>
            <person name="Charkowski A.O."/>
            <person name="Py B."/>
            <person name="Bell K."/>
            <person name="Rauscher L."/>
            <person name="Rodriguez-Palenzuela P."/>
            <person name="Toussaint A."/>
            <person name="Holeva M.C."/>
            <person name="He S.Y."/>
            <person name="Douet V."/>
            <person name="Boccara M."/>
            <person name="Blanco C."/>
            <person name="Toth I."/>
            <person name="Anderson B.D."/>
            <person name="Biehl B.S."/>
            <person name="Mau B."/>
            <person name="Flynn S.M."/>
            <person name="Barras F."/>
            <person name="Lindeberg M."/>
            <person name="Birch P.R."/>
            <person name="Tsuyumu S."/>
            <person name="Shi X."/>
            <person name="Hibbing M."/>
            <person name="Yap M.N."/>
            <person name="Carpentier M."/>
            <person name="Dassa E."/>
            <person name="Umehara M."/>
            <person name="Kim J.F."/>
            <person name="Rusch M."/>
            <person name="Soni P."/>
            <person name="Mayhew G.F."/>
            <person name="Fouts D.E."/>
            <person name="Gill S.R."/>
            <person name="Blattner F.R."/>
            <person name="Keen N.T."/>
            <person name="Perna N.T."/>
        </authorList>
    </citation>
    <scope>NUCLEOTIDE SEQUENCE [LARGE SCALE GENOMIC DNA]</scope>
    <source>
        <strain>3937</strain>
    </source>
</reference>
<keyword id="KW-0071">Autoinducer synthesis</keyword>
<keyword id="KW-0673">Quorum sensing</keyword>
<keyword id="KW-1185">Reference proteome</keyword>
<keyword id="KW-0949">S-adenosyl-L-methionine</keyword>
<keyword id="KW-0808">Transferase</keyword>
<keyword id="KW-0843">Virulence</keyword>
<protein>
    <recommendedName>
        <fullName>Acyl-homoserine-lactone synthase</fullName>
        <ecNumber>2.3.1.184</ecNumber>
    </recommendedName>
    <alternativeName>
        <fullName>Autoinducer synthesis protein ExpI</fullName>
    </alternativeName>
</protein>
<sequence length="212" mass="24670">MLEIFDVSFSLMSNNKLDEVFALRKGTFKDRLDWTVNCINGMEFDEYDNEHTTYLLGVKEGKIICSVRFIEMKYPNMITGTFFSYFDGLNIPEGNYIESSRFFVDRDRVRNLIGTRNPACLTLFLAMINYARKYHYDGILTIVSHPMLTLLKRSGWRISIIQQGLSEKQEKIYLLHLPTDDESRYALIERITRITNAESEQLTTLPLLVPLA</sequence>
<accession>Q47187</accession>
<accession>E0SME6</accession>
<gene>
    <name type="primary">expI</name>
    <name type="ordered locus">Dda3937_03219</name>
</gene>
<dbReference type="EC" id="2.3.1.184"/>
<dbReference type="EMBL" id="X96440">
    <property type="protein sequence ID" value="CAA65306.1"/>
    <property type="molecule type" value="Genomic_DNA"/>
</dbReference>
<dbReference type="EMBL" id="CP002038">
    <property type="protein sequence ID" value="ADN00585.1"/>
    <property type="molecule type" value="Genomic_DNA"/>
</dbReference>
<dbReference type="RefSeq" id="WP_013319980.1">
    <property type="nucleotide sequence ID" value="NC_014500.1"/>
</dbReference>
<dbReference type="SMR" id="Q47187"/>
<dbReference type="STRING" id="198628.Dda3937_03219"/>
<dbReference type="KEGG" id="ddd:Dda3937_03219"/>
<dbReference type="PATRIC" id="fig|198628.6.peg.4338"/>
<dbReference type="eggNOG" id="COG3916">
    <property type="taxonomic scope" value="Bacteria"/>
</dbReference>
<dbReference type="HOGENOM" id="CLU_085711_4_1_6"/>
<dbReference type="OrthoDB" id="6169313at2"/>
<dbReference type="Proteomes" id="UP000006859">
    <property type="component" value="Chromosome"/>
</dbReference>
<dbReference type="GO" id="GO:0061579">
    <property type="term" value="F:N-acyl homoserine lactone synthase activity"/>
    <property type="evidence" value="ECO:0007669"/>
    <property type="project" value="UniProtKB-EC"/>
</dbReference>
<dbReference type="GO" id="GO:0009372">
    <property type="term" value="P:quorum sensing"/>
    <property type="evidence" value="ECO:0007669"/>
    <property type="project" value="UniProtKB-KW"/>
</dbReference>
<dbReference type="GO" id="GO:0007165">
    <property type="term" value="P:signal transduction"/>
    <property type="evidence" value="ECO:0007669"/>
    <property type="project" value="TreeGrafter"/>
</dbReference>
<dbReference type="Gene3D" id="3.40.630.30">
    <property type="match status" value="1"/>
</dbReference>
<dbReference type="InterPro" id="IPR016181">
    <property type="entry name" value="Acyl_CoA_acyltransferase"/>
</dbReference>
<dbReference type="InterPro" id="IPR018311">
    <property type="entry name" value="Autoind_synth_CS"/>
</dbReference>
<dbReference type="InterPro" id="IPR001690">
    <property type="entry name" value="Autoind_synthase"/>
</dbReference>
<dbReference type="PANTHER" id="PTHR39322">
    <property type="entry name" value="ACYL-HOMOSERINE-LACTONE SYNTHASE"/>
    <property type="match status" value="1"/>
</dbReference>
<dbReference type="PANTHER" id="PTHR39322:SF1">
    <property type="entry name" value="ISOVALERYL-HOMOSERINE LACTONE SYNTHASE"/>
    <property type="match status" value="1"/>
</dbReference>
<dbReference type="Pfam" id="PF00765">
    <property type="entry name" value="Autoind_synth"/>
    <property type="match status" value="1"/>
</dbReference>
<dbReference type="PRINTS" id="PR01549">
    <property type="entry name" value="AUTOINDCRSYN"/>
</dbReference>
<dbReference type="SUPFAM" id="SSF55729">
    <property type="entry name" value="Acyl-CoA N-acyltransferases (Nat)"/>
    <property type="match status" value="1"/>
</dbReference>
<dbReference type="PROSITE" id="PS00949">
    <property type="entry name" value="AUTOINDUCER_SYNTH_1"/>
    <property type="match status" value="1"/>
</dbReference>
<dbReference type="PROSITE" id="PS51187">
    <property type="entry name" value="AUTOINDUCER_SYNTH_2"/>
    <property type="match status" value="1"/>
</dbReference>
<evidence type="ECO:0000255" key="1">
    <source>
        <dbReference type="PROSITE-ProRule" id="PRU00533"/>
    </source>
</evidence>
<organism>
    <name type="scientific">Dickeya dadantii (strain 3937)</name>
    <name type="common">Erwinia chrysanthemi (strain 3937)</name>
    <dbReference type="NCBI Taxonomy" id="198628"/>
    <lineage>
        <taxon>Bacteria</taxon>
        <taxon>Pseudomonadati</taxon>
        <taxon>Pseudomonadota</taxon>
        <taxon>Gammaproteobacteria</taxon>
        <taxon>Enterobacterales</taxon>
        <taxon>Pectobacteriaceae</taxon>
        <taxon>Dickeya</taxon>
    </lineage>
</organism>
<comment type="function">
    <text>Required for the synthesis of OHHL (N-(3-oxohexanoyl)-L-homoserine lactone), an autoinducer molecule which binds to ExpR and thus acts in virulence (soft rot disease) through the activation of genes for plant tissue macerating enzymes.</text>
</comment>
<comment type="catalytic activity">
    <reaction>
        <text>a fatty acyl-[ACP] + S-adenosyl-L-methionine = an N-acyl-L-homoserine lactone + S-methyl-5'-thioadenosine + holo-[ACP] + H(+)</text>
        <dbReference type="Rhea" id="RHEA:10096"/>
        <dbReference type="Rhea" id="RHEA-COMP:9685"/>
        <dbReference type="Rhea" id="RHEA-COMP:14125"/>
        <dbReference type="ChEBI" id="CHEBI:15378"/>
        <dbReference type="ChEBI" id="CHEBI:17509"/>
        <dbReference type="ChEBI" id="CHEBI:55474"/>
        <dbReference type="ChEBI" id="CHEBI:59789"/>
        <dbReference type="ChEBI" id="CHEBI:64479"/>
        <dbReference type="ChEBI" id="CHEBI:138651"/>
        <dbReference type="EC" id="2.3.1.184"/>
    </reaction>
</comment>
<comment type="similarity">
    <text evidence="1">Belongs to the autoinducer synthase family.</text>
</comment>
<name>EXPI_DICD3</name>